<reference key="1">
    <citation type="journal article" date="1986" name="J. Virol.">
        <title>Epidermodysplasia verruciformis-associated human papillomavirus 8: genomic sequence and comparative analysis.</title>
        <authorList>
            <person name="Fuchs P.G."/>
            <person name="Iftner T."/>
            <person name="Weninger J."/>
            <person name="Pfister H."/>
        </authorList>
    </citation>
    <scope>NUCLEOTIDE SEQUENCE [GENOMIC DNA]</scope>
</reference>
<sequence>MAVWQSATGKVYLPPSTPVARVQSTDEYIQRTNIYYHANTDRLLTVGHPYFNVYNNNGDTLQVPKVSGNQHRVFRLKLPDPNRFALADMSVYNPDKERLVWACRGLEISRGQPLGVGSTGHPYFNKVKDTENSNSYTTTSTDDRQNTSFDPKQIQMFIVGCTPCIGEHWEKAIPCAEDQQQGLCPPIELKNTVIEDGDMADIGFGNMNFKTLQQNRSDVSLDIVNEICKYPDFLKMQNDVYGDACFFYARREQCYARHFFVRGGKTGDDIPAAQIDDGMMKNQYYIPGGQDQSQKDIGNAMYFPTVSGSLVSSDAQLFNRPFWLQRAQGHNNGILWANQMFVTVVDNTRNTNFSISVYTENGELKNITDYKSTQFREYLRHVEEYEISLILQLCKIPLKADVLAQINAMNSSLLEEWQLGFVPTPDTPIHDTYRYIDSLATRCPDKSPPKEKPDPYAKFNFWNVDLTERLSLDLDQYSLGRKFLFQAGLQQTTVNGTKSISRGSVRGTKRKRKN</sequence>
<proteinExistence type="inferred from homology"/>
<gene>
    <name evidence="1" type="primary">L1</name>
</gene>
<comment type="function">
    <text evidence="1">Forms an icosahedral capsid with a T=7 symmetry and a 50 nm diameter. The capsid is composed of 72 pentamers linked to each other by disulfide bonds and associated with L2 proteins. Binds to heparan sulfate proteoglycans on cell surface of basal layer keratinocytes to provide initial virion attachment. This binding mediates a conformational change in the virus capsid that facilitates efficient infection. The virion enters the host cell via endocytosis. During virus trafficking, L1 protein dissociates from the viral DNA and the genomic DNA is released to the host nucleus. The virion assembly takes place within the cell nucleus. Encapsulates the genomic DNA together with protein L2.</text>
</comment>
<comment type="subunit">
    <text evidence="1">Self-assembles into homopentamers. The capsid has an icosahedral symmetry and consists of 72 capsomers, with each capsomer being a pentamer of L1. Interacts with the minor capsid protein L2; this interaction is necessary for viral genome encapsidation. Interacts with protein E2; this interaction enhances E2-dependent replication and transcription activation.</text>
</comment>
<comment type="subcellular location">
    <subcellularLocation>
        <location evidence="1">Virion</location>
    </subcellularLocation>
    <subcellularLocation>
        <location evidence="1">Host nucleus</location>
    </subcellularLocation>
</comment>
<comment type="similarity">
    <text evidence="1">Belongs to the papillomaviridae L1 protein family.</text>
</comment>
<protein>
    <recommendedName>
        <fullName evidence="1">Major capsid protein L1</fullName>
    </recommendedName>
</protein>
<keyword id="KW-0167">Capsid protein</keyword>
<keyword id="KW-1015">Disulfide bond</keyword>
<keyword id="KW-1048">Host nucleus</keyword>
<keyword id="KW-0945">Host-virus interaction</keyword>
<keyword id="KW-0426">Late protein</keyword>
<keyword id="KW-1145">T=7 icosahedral capsid protein</keyword>
<keyword id="KW-1161">Viral attachment to host cell</keyword>
<keyword id="KW-1162">Viral penetration into host cytoplasm</keyword>
<keyword id="KW-0946">Virion</keyword>
<keyword id="KW-1164">Virus endocytosis by host</keyword>
<keyword id="KW-1160">Virus entry into host cell</keyword>
<name>VL1_HPV08</name>
<organism>
    <name type="scientific">Human papillomavirus type 8</name>
    <dbReference type="NCBI Taxonomy" id="10579"/>
    <lineage>
        <taxon>Viruses</taxon>
        <taxon>Monodnaviria</taxon>
        <taxon>Shotokuvirae</taxon>
        <taxon>Cossaviricota</taxon>
        <taxon>Papovaviricetes</taxon>
        <taxon>Zurhausenvirales</taxon>
        <taxon>Papillomaviridae</taxon>
        <taxon>Firstpapillomavirinae</taxon>
        <taxon>Betapapillomavirus</taxon>
        <taxon>Betapapillomavirus 1</taxon>
    </lineage>
</organism>
<evidence type="ECO:0000255" key="1">
    <source>
        <dbReference type="HAMAP-Rule" id="MF_04002"/>
    </source>
</evidence>
<evidence type="ECO:0000256" key="2">
    <source>
        <dbReference type="SAM" id="MobiDB-lite"/>
    </source>
</evidence>
<accession>P06417</accession>
<feature type="chain" id="PRO_0000133492" description="Major capsid protein L1">
    <location>
        <begin position="1"/>
        <end position="514"/>
    </location>
</feature>
<feature type="region of interest" description="Disordered" evidence="2">
    <location>
        <begin position="127"/>
        <end position="147"/>
    </location>
</feature>
<feature type="disulfide bond" description="Interchain (with C-443)" evidence="1">
    <location>
        <position position="175"/>
    </location>
</feature>
<feature type="disulfide bond" description="Interchain (with C-175)" evidence="1">
    <location>
        <position position="443"/>
    </location>
</feature>
<dbReference type="EMBL" id="M12737">
    <property type="status" value="NOT_ANNOTATED_CDS"/>
    <property type="molecule type" value="Genomic_DNA"/>
</dbReference>
<dbReference type="PIR" id="A03642">
    <property type="entry name" value="P1WL8"/>
</dbReference>
<dbReference type="SMR" id="P06417"/>
<dbReference type="Proteomes" id="UP000009103">
    <property type="component" value="Segment"/>
</dbReference>
<dbReference type="GO" id="GO:0042025">
    <property type="term" value="C:host cell nucleus"/>
    <property type="evidence" value="ECO:0007669"/>
    <property type="project" value="UniProtKB-SubCell"/>
</dbReference>
<dbReference type="GO" id="GO:0039620">
    <property type="term" value="C:T=7 icosahedral viral capsid"/>
    <property type="evidence" value="ECO:0007669"/>
    <property type="project" value="UniProtKB-UniRule"/>
</dbReference>
<dbReference type="GO" id="GO:0005198">
    <property type="term" value="F:structural molecule activity"/>
    <property type="evidence" value="ECO:0007669"/>
    <property type="project" value="UniProtKB-UniRule"/>
</dbReference>
<dbReference type="GO" id="GO:0075509">
    <property type="term" value="P:endocytosis involved in viral entry into host cell"/>
    <property type="evidence" value="ECO:0007669"/>
    <property type="project" value="UniProtKB-KW"/>
</dbReference>
<dbReference type="GO" id="GO:0019062">
    <property type="term" value="P:virion attachment to host cell"/>
    <property type="evidence" value="ECO:0007669"/>
    <property type="project" value="UniProtKB-UniRule"/>
</dbReference>
<dbReference type="Gene3D" id="2.60.175.20">
    <property type="entry name" value="Major capsid L1 (late) superfamily, Papillomavirus"/>
    <property type="match status" value="2"/>
</dbReference>
<dbReference type="HAMAP" id="MF_04002">
    <property type="entry name" value="PPV_L1"/>
    <property type="match status" value="1"/>
</dbReference>
<dbReference type="InterPro" id="IPR002210">
    <property type="entry name" value="Capsid_L1_Papillomavir"/>
</dbReference>
<dbReference type="InterPro" id="IPR036973">
    <property type="entry name" value="Capsid_L1_sf_Papillomavir"/>
</dbReference>
<dbReference type="InterPro" id="IPR011222">
    <property type="entry name" value="dsDNA_vir_gr_I_capsid"/>
</dbReference>
<dbReference type="Pfam" id="PF00500">
    <property type="entry name" value="Late_protein_L1"/>
    <property type="match status" value="1"/>
</dbReference>
<dbReference type="PRINTS" id="PR00865">
    <property type="entry name" value="HPVCAPSIDL1"/>
</dbReference>
<dbReference type="SUPFAM" id="SSF88648">
    <property type="entry name" value="Group I dsDNA viruses"/>
    <property type="match status" value="1"/>
</dbReference>
<organismHost>
    <name type="scientific">Homo sapiens</name>
    <name type="common">Human</name>
    <dbReference type="NCBI Taxonomy" id="9606"/>
</organismHost>